<organism>
    <name type="scientific">Hyphomonas neptunium (strain ATCC 15444)</name>
    <dbReference type="NCBI Taxonomy" id="228405"/>
    <lineage>
        <taxon>Bacteria</taxon>
        <taxon>Pseudomonadati</taxon>
        <taxon>Pseudomonadota</taxon>
        <taxon>Alphaproteobacteria</taxon>
        <taxon>Hyphomonadales</taxon>
        <taxon>Hyphomonadaceae</taxon>
        <taxon>Hyphomonas</taxon>
    </lineage>
</organism>
<comment type="function">
    <text evidence="1">Catalyzes the reversible phosphorylation of UMP to UDP.</text>
</comment>
<comment type="catalytic activity">
    <reaction evidence="1">
        <text>UMP + ATP = UDP + ADP</text>
        <dbReference type="Rhea" id="RHEA:24400"/>
        <dbReference type="ChEBI" id="CHEBI:30616"/>
        <dbReference type="ChEBI" id="CHEBI:57865"/>
        <dbReference type="ChEBI" id="CHEBI:58223"/>
        <dbReference type="ChEBI" id="CHEBI:456216"/>
        <dbReference type="EC" id="2.7.4.22"/>
    </reaction>
</comment>
<comment type="activity regulation">
    <text evidence="1">Inhibited by UTP.</text>
</comment>
<comment type="pathway">
    <text evidence="1">Pyrimidine metabolism; CTP biosynthesis via de novo pathway; UDP from UMP (UMPK route): step 1/1.</text>
</comment>
<comment type="subunit">
    <text evidence="1">Homohexamer.</text>
</comment>
<comment type="subcellular location">
    <subcellularLocation>
        <location evidence="1">Cytoplasm</location>
    </subcellularLocation>
</comment>
<comment type="similarity">
    <text evidence="1">Belongs to the UMP kinase family.</text>
</comment>
<proteinExistence type="inferred from homology"/>
<sequence>MQSGASETNKLKYRRVLLKLSGEALMGGGQFGIDIPTCEQFARAIAEAREAGAEICLVIGGGNIFRGVAGAAKGMERAQADSMGMLATVMNALAMQSVLENLGVPTRVQSALNMDAICEPYIRRRAHRHMEKGRVVIFAAGIGNPFFTTDTGAALRAIEMNCDALLKGTQVDGVYTADPKLDATATRYHQVAYQEILAKDLKVMDSSAVSLMRDNNIPIVVFSLKEEGSLLNVLYGRGTSTTITKEGAEKP</sequence>
<evidence type="ECO:0000255" key="1">
    <source>
        <dbReference type="HAMAP-Rule" id="MF_01220"/>
    </source>
</evidence>
<reference key="1">
    <citation type="journal article" date="2006" name="J. Bacteriol.">
        <title>Comparative genomic evidence for a close relationship between the dimorphic prosthecate bacteria Hyphomonas neptunium and Caulobacter crescentus.</title>
        <authorList>
            <person name="Badger J.H."/>
            <person name="Hoover T.R."/>
            <person name="Brun Y.V."/>
            <person name="Weiner R.M."/>
            <person name="Laub M.T."/>
            <person name="Alexandre G."/>
            <person name="Mrazek J."/>
            <person name="Ren Q."/>
            <person name="Paulsen I.T."/>
            <person name="Nelson K.E."/>
            <person name="Khouri H.M."/>
            <person name="Radune D."/>
            <person name="Sosa J."/>
            <person name="Dodson R.J."/>
            <person name="Sullivan S.A."/>
            <person name="Rosovitz M.J."/>
            <person name="Madupu R."/>
            <person name="Brinkac L.M."/>
            <person name="Durkin A.S."/>
            <person name="Daugherty S.C."/>
            <person name="Kothari S.P."/>
            <person name="Giglio M.G."/>
            <person name="Zhou L."/>
            <person name="Haft D.H."/>
            <person name="Selengut J.D."/>
            <person name="Davidsen T.M."/>
            <person name="Yang Q."/>
            <person name="Zafar N."/>
            <person name="Ward N.L."/>
        </authorList>
    </citation>
    <scope>NUCLEOTIDE SEQUENCE [LARGE SCALE GENOMIC DNA]</scope>
    <source>
        <strain>ATCC 15444</strain>
    </source>
</reference>
<protein>
    <recommendedName>
        <fullName evidence="1">Uridylate kinase</fullName>
        <shortName evidence="1">UK</shortName>
        <ecNumber evidence="1">2.7.4.22</ecNumber>
    </recommendedName>
    <alternativeName>
        <fullName evidence="1">Uridine monophosphate kinase</fullName>
        <shortName evidence="1">UMP kinase</shortName>
        <shortName evidence="1">UMPK</shortName>
    </alternativeName>
</protein>
<accession>Q0C1B9</accession>
<gene>
    <name evidence="1" type="primary">pyrH</name>
    <name type="ordered locus">HNE_1770</name>
</gene>
<dbReference type="EC" id="2.7.4.22" evidence="1"/>
<dbReference type="EMBL" id="CP000158">
    <property type="protein sequence ID" value="ABI76945.1"/>
    <property type="molecule type" value="Genomic_DNA"/>
</dbReference>
<dbReference type="RefSeq" id="WP_011646774.1">
    <property type="nucleotide sequence ID" value="NC_008358.1"/>
</dbReference>
<dbReference type="SMR" id="Q0C1B9"/>
<dbReference type="STRING" id="228405.HNE_1770"/>
<dbReference type="KEGG" id="hne:HNE_1770"/>
<dbReference type="eggNOG" id="COG0528">
    <property type="taxonomic scope" value="Bacteria"/>
</dbReference>
<dbReference type="HOGENOM" id="CLU_033861_0_0_5"/>
<dbReference type="UniPathway" id="UPA00159">
    <property type="reaction ID" value="UER00275"/>
</dbReference>
<dbReference type="Proteomes" id="UP000001959">
    <property type="component" value="Chromosome"/>
</dbReference>
<dbReference type="GO" id="GO:0005829">
    <property type="term" value="C:cytosol"/>
    <property type="evidence" value="ECO:0007669"/>
    <property type="project" value="TreeGrafter"/>
</dbReference>
<dbReference type="GO" id="GO:0005524">
    <property type="term" value="F:ATP binding"/>
    <property type="evidence" value="ECO:0007669"/>
    <property type="project" value="UniProtKB-KW"/>
</dbReference>
<dbReference type="GO" id="GO:0033862">
    <property type="term" value="F:UMP kinase activity"/>
    <property type="evidence" value="ECO:0007669"/>
    <property type="project" value="UniProtKB-EC"/>
</dbReference>
<dbReference type="GO" id="GO:0044210">
    <property type="term" value="P:'de novo' CTP biosynthetic process"/>
    <property type="evidence" value="ECO:0007669"/>
    <property type="project" value="UniProtKB-UniRule"/>
</dbReference>
<dbReference type="GO" id="GO:0006225">
    <property type="term" value="P:UDP biosynthetic process"/>
    <property type="evidence" value="ECO:0007669"/>
    <property type="project" value="TreeGrafter"/>
</dbReference>
<dbReference type="CDD" id="cd04254">
    <property type="entry name" value="AAK_UMPK-PyrH-Ec"/>
    <property type="match status" value="1"/>
</dbReference>
<dbReference type="FunFam" id="3.40.1160.10:FF:000001">
    <property type="entry name" value="Uridylate kinase"/>
    <property type="match status" value="1"/>
</dbReference>
<dbReference type="Gene3D" id="3.40.1160.10">
    <property type="entry name" value="Acetylglutamate kinase-like"/>
    <property type="match status" value="1"/>
</dbReference>
<dbReference type="HAMAP" id="MF_01220_B">
    <property type="entry name" value="PyrH_B"/>
    <property type="match status" value="1"/>
</dbReference>
<dbReference type="InterPro" id="IPR036393">
    <property type="entry name" value="AceGlu_kinase-like_sf"/>
</dbReference>
<dbReference type="InterPro" id="IPR001048">
    <property type="entry name" value="Asp/Glu/Uridylate_kinase"/>
</dbReference>
<dbReference type="InterPro" id="IPR011817">
    <property type="entry name" value="Uridylate_kinase"/>
</dbReference>
<dbReference type="InterPro" id="IPR015963">
    <property type="entry name" value="Uridylate_kinase_bac"/>
</dbReference>
<dbReference type="NCBIfam" id="TIGR02075">
    <property type="entry name" value="pyrH_bact"/>
    <property type="match status" value="1"/>
</dbReference>
<dbReference type="PANTHER" id="PTHR42833">
    <property type="entry name" value="URIDYLATE KINASE"/>
    <property type="match status" value="1"/>
</dbReference>
<dbReference type="PANTHER" id="PTHR42833:SF4">
    <property type="entry name" value="URIDYLATE KINASE PUMPKIN, CHLOROPLASTIC"/>
    <property type="match status" value="1"/>
</dbReference>
<dbReference type="Pfam" id="PF00696">
    <property type="entry name" value="AA_kinase"/>
    <property type="match status" value="1"/>
</dbReference>
<dbReference type="PIRSF" id="PIRSF005650">
    <property type="entry name" value="Uridylate_kin"/>
    <property type="match status" value="1"/>
</dbReference>
<dbReference type="SUPFAM" id="SSF53633">
    <property type="entry name" value="Carbamate kinase-like"/>
    <property type="match status" value="1"/>
</dbReference>
<keyword id="KW-0067">ATP-binding</keyword>
<keyword id="KW-0963">Cytoplasm</keyword>
<keyword id="KW-0418">Kinase</keyword>
<keyword id="KW-0547">Nucleotide-binding</keyword>
<keyword id="KW-0665">Pyrimidine biosynthesis</keyword>
<keyword id="KW-1185">Reference proteome</keyword>
<keyword id="KW-0808">Transferase</keyword>
<feature type="chain" id="PRO_0000323865" description="Uridylate kinase">
    <location>
        <begin position="1"/>
        <end position="251"/>
    </location>
</feature>
<feature type="binding site" evidence="1">
    <location>
        <begin position="19"/>
        <end position="22"/>
    </location>
    <ligand>
        <name>ATP</name>
        <dbReference type="ChEBI" id="CHEBI:30616"/>
    </ligand>
</feature>
<feature type="binding site" evidence="1">
    <location>
        <position position="61"/>
    </location>
    <ligand>
        <name>UMP</name>
        <dbReference type="ChEBI" id="CHEBI:57865"/>
    </ligand>
</feature>
<feature type="binding site" evidence="1">
    <location>
        <position position="62"/>
    </location>
    <ligand>
        <name>ATP</name>
        <dbReference type="ChEBI" id="CHEBI:30616"/>
    </ligand>
</feature>
<feature type="binding site" evidence="1">
    <location>
        <position position="66"/>
    </location>
    <ligand>
        <name>ATP</name>
        <dbReference type="ChEBI" id="CHEBI:30616"/>
    </ligand>
</feature>
<feature type="binding site" evidence="1">
    <location>
        <position position="81"/>
    </location>
    <ligand>
        <name>UMP</name>
        <dbReference type="ChEBI" id="CHEBI:57865"/>
    </ligand>
</feature>
<feature type="binding site" evidence="1">
    <location>
        <begin position="142"/>
        <end position="149"/>
    </location>
    <ligand>
        <name>UMP</name>
        <dbReference type="ChEBI" id="CHEBI:57865"/>
    </ligand>
</feature>
<feature type="binding site" evidence="1">
    <location>
        <position position="169"/>
    </location>
    <ligand>
        <name>ATP</name>
        <dbReference type="ChEBI" id="CHEBI:30616"/>
    </ligand>
</feature>
<feature type="binding site" evidence="1">
    <location>
        <position position="170"/>
    </location>
    <ligand>
        <name>ATP</name>
        <dbReference type="ChEBI" id="CHEBI:30616"/>
    </ligand>
</feature>
<feature type="binding site" evidence="1">
    <location>
        <position position="175"/>
    </location>
    <ligand>
        <name>ATP</name>
        <dbReference type="ChEBI" id="CHEBI:30616"/>
    </ligand>
</feature>
<feature type="binding site" evidence="1">
    <location>
        <position position="178"/>
    </location>
    <ligand>
        <name>ATP</name>
        <dbReference type="ChEBI" id="CHEBI:30616"/>
    </ligand>
</feature>
<name>PYRH_HYPNA</name>